<keyword id="KW-0012">Acyltransferase</keyword>
<keyword id="KW-0963">Cytoplasm</keyword>
<keyword id="KW-0275">Fatty acid biosynthesis</keyword>
<keyword id="KW-0276">Fatty acid metabolism</keyword>
<keyword id="KW-0444">Lipid biosynthesis</keyword>
<keyword id="KW-0443">Lipid metabolism</keyword>
<keyword id="KW-0511">Multifunctional enzyme</keyword>
<keyword id="KW-0808">Transferase</keyword>
<gene>
    <name evidence="1" type="primary">fabH</name>
    <name type="ordered locus">BMA10229_A2802</name>
</gene>
<organism>
    <name type="scientific">Burkholderia mallei (strain NCTC 10229)</name>
    <dbReference type="NCBI Taxonomy" id="412022"/>
    <lineage>
        <taxon>Bacteria</taxon>
        <taxon>Pseudomonadati</taxon>
        <taxon>Pseudomonadota</taxon>
        <taxon>Betaproteobacteria</taxon>
        <taxon>Burkholderiales</taxon>
        <taxon>Burkholderiaceae</taxon>
        <taxon>Burkholderia</taxon>
        <taxon>pseudomallei group</taxon>
    </lineage>
</organism>
<dbReference type="EC" id="2.3.1.180" evidence="1"/>
<dbReference type="EMBL" id="CP000546">
    <property type="protein sequence ID" value="ABN02604.1"/>
    <property type="molecule type" value="Genomic_DNA"/>
</dbReference>
<dbReference type="RefSeq" id="WP_004191537.1">
    <property type="nucleotide sequence ID" value="NC_008836.1"/>
</dbReference>
<dbReference type="SMR" id="A2S9Y2"/>
<dbReference type="KEGG" id="bml:BMA10229_A2802"/>
<dbReference type="HOGENOM" id="CLU_039592_3_1_4"/>
<dbReference type="UniPathway" id="UPA00094"/>
<dbReference type="Proteomes" id="UP000002283">
    <property type="component" value="Chromosome I"/>
</dbReference>
<dbReference type="GO" id="GO:0005737">
    <property type="term" value="C:cytoplasm"/>
    <property type="evidence" value="ECO:0007669"/>
    <property type="project" value="UniProtKB-SubCell"/>
</dbReference>
<dbReference type="GO" id="GO:0004315">
    <property type="term" value="F:3-oxoacyl-[acyl-carrier-protein] synthase activity"/>
    <property type="evidence" value="ECO:0007669"/>
    <property type="project" value="InterPro"/>
</dbReference>
<dbReference type="GO" id="GO:0033818">
    <property type="term" value="F:beta-ketoacyl-acyl-carrier-protein synthase III activity"/>
    <property type="evidence" value="ECO:0007669"/>
    <property type="project" value="UniProtKB-UniRule"/>
</dbReference>
<dbReference type="GO" id="GO:0006633">
    <property type="term" value="P:fatty acid biosynthetic process"/>
    <property type="evidence" value="ECO:0007669"/>
    <property type="project" value="UniProtKB-UniRule"/>
</dbReference>
<dbReference type="CDD" id="cd00830">
    <property type="entry name" value="KAS_III"/>
    <property type="match status" value="1"/>
</dbReference>
<dbReference type="FunFam" id="3.40.47.10:FF:000004">
    <property type="entry name" value="3-oxoacyl-[acyl-carrier-protein] synthase 3"/>
    <property type="match status" value="1"/>
</dbReference>
<dbReference type="Gene3D" id="3.40.47.10">
    <property type="match status" value="1"/>
</dbReference>
<dbReference type="HAMAP" id="MF_01815">
    <property type="entry name" value="FabH"/>
    <property type="match status" value="1"/>
</dbReference>
<dbReference type="InterPro" id="IPR013747">
    <property type="entry name" value="ACP_syn_III_C"/>
</dbReference>
<dbReference type="InterPro" id="IPR013751">
    <property type="entry name" value="ACP_syn_III_N"/>
</dbReference>
<dbReference type="InterPro" id="IPR004655">
    <property type="entry name" value="FabH"/>
</dbReference>
<dbReference type="InterPro" id="IPR016039">
    <property type="entry name" value="Thiolase-like"/>
</dbReference>
<dbReference type="NCBIfam" id="TIGR00747">
    <property type="entry name" value="fabH"/>
    <property type="match status" value="1"/>
</dbReference>
<dbReference type="NCBIfam" id="NF006829">
    <property type="entry name" value="PRK09352.1"/>
    <property type="match status" value="1"/>
</dbReference>
<dbReference type="PANTHER" id="PTHR43091">
    <property type="entry name" value="3-OXOACYL-[ACYL-CARRIER-PROTEIN] SYNTHASE"/>
    <property type="match status" value="1"/>
</dbReference>
<dbReference type="PANTHER" id="PTHR43091:SF1">
    <property type="entry name" value="BETA-KETOACYL-[ACYL-CARRIER-PROTEIN] SYNTHASE III, CHLOROPLASTIC"/>
    <property type="match status" value="1"/>
</dbReference>
<dbReference type="Pfam" id="PF08545">
    <property type="entry name" value="ACP_syn_III"/>
    <property type="match status" value="1"/>
</dbReference>
<dbReference type="Pfam" id="PF08541">
    <property type="entry name" value="ACP_syn_III_C"/>
    <property type="match status" value="1"/>
</dbReference>
<dbReference type="SUPFAM" id="SSF53901">
    <property type="entry name" value="Thiolase-like"/>
    <property type="match status" value="1"/>
</dbReference>
<sequence length="329" mass="34823">MAQSTLYSRVLGTGSYLPPDRVTNQELADRLAKDGIETSDEWIVARTGIRARHFAAPDVTTSDLALVAAQRAIEAADVDPQSIDLIIVATSTPDFVFPSTACLLQNKLGIKNGGAAFDVQAVCSGFAYALATADSFIRTGQHRTALVIGAEAFSRILDFKDRTTCVLFGDGAGAVVLSASEEPGILGSALHADGSYSNILCTPGNVNRGVIAGSAFLHMDGQAVFKLAVNVLEKVAVEALSKAELASEQVDWLIPHQANIRIMTSTCRKLGLPQERMIVTVDEHGNTSAASIPLALDVAVRDGRIKRGQHVLIEGVGGGFTWGASVFRF</sequence>
<name>FABH_BURM9</name>
<protein>
    <recommendedName>
        <fullName evidence="1">Beta-ketoacyl-[acyl-carrier-protein] synthase III</fullName>
        <shortName evidence="1">Beta-ketoacyl-ACP synthase III</shortName>
        <shortName evidence="1">KAS III</shortName>
        <ecNumber evidence="1">2.3.1.180</ecNumber>
    </recommendedName>
    <alternativeName>
        <fullName evidence="1">3-oxoacyl-[acyl-carrier-protein] synthase 3</fullName>
    </alternativeName>
    <alternativeName>
        <fullName evidence="1">3-oxoacyl-[acyl-carrier-protein] synthase III</fullName>
    </alternativeName>
</protein>
<accession>A2S9Y2</accession>
<feature type="chain" id="PRO_1000070218" description="Beta-ketoacyl-[acyl-carrier-protein] synthase III">
    <location>
        <begin position="1"/>
        <end position="329"/>
    </location>
</feature>
<feature type="region of interest" description="ACP-binding" evidence="1">
    <location>
        <begin position="257"/>
        <end position="261"/>
    </location>
</feature>
<feature type="active site" evidence="1">
    <location>
        <position position="123"/>
    </location>
</feature>
<feature type="active site" evidence="1">
    <location>
        <position position="256"/>
    </location>
</feature>
<feature type="active site" evidence="1">
    <location>
        <position position="286"/>
    </location>
</feature>
<evidence type="ECO:0000255" key="1">
    <source>
        <dbReference type="HAMAP-Rule" id="MF_01815"/>
    </source>
</evidence>
<reference key="1">
    <citation type="journal article" date="2010" name="Genome Biol. Evol.">
        <title>Continuing evolution of Burkholderia mallei through genome reduction and large-scale rearrangements.</title>
        <authorList>
            <person name="Losada L."/>
            <person name="Ronning C.M."/>
            <person name="DeShazer D."/>
            <person name="Woods D."/>
            <person name="Fedorova N."/>
            <person name="Kim H.S."/>
            <person name="Shabalina S.A."/>
            <person name="Pearson T.R."/>
            <person name="Brinkac L."/>
            <person name="Tan P."/>
            <person name="Nandi T."/>
            <person name="Crabtree J."/>
            <person name="Badger J."/>
            <person name="Beckstrom-Sternberg S."/>
            <person name="Saqib M."/>
            <person name="Schutzer S.E."/>
            <person name="Keim P."/>
            <person name="Nierman W.C."/>
        </authorList>
    </citation>
    <scope>NUCLEOTIDE SEQUENCE [LARGE SCALE GENOMIC DNA]</scope>
    <source>
        <strain>NCTC 10229</strain>
    </source>
</reference>
<comment type="function">
    <text evidence="1">Catalyzes the condensation reaction of fatty acid synthesis by the addition to an acyl acceptor of two carbons from malonyl-ACP. Catalyzes the first condensation reaction which initiates fatty acid synthesis and may therefore play a role in governing the total rate of fatty acid production. Possesses both acetoacetyl-ACP synthase and acetyl transacylase activities. Its substrate specificity determines the biosynthesis of branched-chain and/or straight-chain of fatty acids.</text>
</comment>
<comment type="catalytic activity">
    <reaction evidence="1">
        <text>malonyl-[ACP] + acetyl-CoA + H(+) = 3-oxobutanoyl-[ACP] + CO2 + CoA</text>
        <dbReference type="Rhea" id="RHEA:12080"/>
        <dbReference type="Rhea" id="RHEA-COMP:9623"/>
        <dbReference type="Rhea" id="RHEA-COMP:9625"/>
        <dbReference type="ChEBI" id="CHEBI:15378"/>
        <dbReference type="ChEBI" id="CHEBI:16526"/>
        <dbReference type="ChEBI" id="CHEBI:57287"/>
        <dbReference type="ChEBI" id="CHEBI:57288"/>
        <dbReference type="ChEBI" id="CHEBI:78449"/>
        <dbReference type="ChEBI" id="CHEBI:78450"/>
        <dbReference type="EC" id="2.3.1.180"/>
    </reaction>
</comment>
<comment type="pathway">
    <text evidence="1">Lipid metabolism; fatty acid biosynthesis.</text>
</comment>
<comment type="subunit">
    <text evidence="1">Homodimer.</text>
</comment>
<comment type="subcellular location">
    <subcellularLocation>
        <location evidence="1">Cytoplasm</location>
    </subcellularLocation>
</comment>
<comment type="domain">
    <text evidence="1">The last Arg residue of the ACP-binding site is essential for the weak association between ACP/AcpP and FabH.</text>
</comment>
<comment type="similarity">
    <text evidence="1">Belongs to the thiolase-like superfamily. FabH family.</text>
</comment>
<proteinExistence type="inferred from homology"/>